<sequence length="317" mass="35905">MGYDVTRFQGDVDEDLICPICSGVLEEPVQAPHCEHAFCNACITQWFSQQQTCPVDRSVVTVAHLRPVPRIMRNMLSKLQIACDNAVFGCSAVVRLDNLMSHLSDCEHNPKRPVTCEQGCGLEMPKDELPNHNCIKHLRSVVQQQQTRIAELEKTSAEHKHQLAEQKRDIQLLKAYMRAIRSVNPNLQNLEETIEYNEILEWVNSLQPARVTRWGGMISTPDAVLQAVIKRSLVESGCPASIVNELIENAHERSWPQGLATLETRQMNRRYYENYVAKRIPGKQAVVVMACENQHMGDDMVQEPGLVMIFAHGVEEI</sequence>
<accession>Q5R7T5</accession>
<proteinExistence type="evidence at transcript level"/>
<reference key="1">
    <citation type="submission" date="2004-11" db="EMBL/GenBank/DDBJ databases">
        <authorList>
            <consortium name="The German cDNA consortium"/>
        </authorList>
    </citation>
    <scope>NUCLEOTIDE SEQUENCE [LARGE SCALE MRNA]</scope>
    <source>
        <tissue>Brain cortex</tissue>
    </source>
</reference>
<comment type="function">
    <text evidence="3">Acts as E3 ubiquitin-protein ligase and regulates the degradation of target proteins. Polyubiquitinates MYD88. Negatively regulates MYD88-dependent production of pro-inflammatory cytokines. Can promote TRIF-dependent production of type I interferon and inhibits infection with vesicular stomatitis virus. Also promotes activation of TBK1 and IRF3. Involved in the ubiquitination of erythropoietin (EPO) and interleukin-3 (IL-3) receptors. Thus, through maintaining basal levels of cytokine receptors, RNF41 is involved in the control of hematopoietic progenitor cell differentiation into myeloerythroid lineages. Contributes to the maintenance of steady-state ERBB3 levels by mediating its growth factor-independent degradation. Involved in the degradation of the inhibitor of apoptosis BIRC6 and thus is an important regulator of cell death by promoting apoptosis. Also acts as a PRKN modifier that accelerates its degradation, resulting in a reduction of PRKN activity, influencing the balance of intracellular redox state. The RNF41-PRKN pathway regulates autophagosome-lysosome fusion during late mitophagy. Mitophagy is a selective form of autophagy necessary for mitochondrial quality control.</text>
</comment>
<comment type="catalytic activity">
    <reaction>
        <text>S-ubiquitinyl-[E2 ubiquitin-conjugating enzyme]-L-cysteine + [acceptor protein]-L-lysine = [E2 ubiquitin-conjugating enzyme]-L-cysteine + N(6)-ubiquitinyl-[acceptor protein]-L-lysine.</text>
        <dbReference type="EC" id="2.3.2.27"/>
    </reaction>
</comment>
<comment type="pathway">
    <text>Protein modification; protein ubiquitination.</text>
</comment>
<comment type="subunit">
    <text evidence="2 3">Interacts with USP8, ERBB3, PRKN, BIRC6, CSF2RB, EPOR, IL3RA, MYD88 and TBK1. Interacts with CLEC16A.</text>
</comment>
<comment type="PTM">
    <text evidence="1">Autoubiquitinated. Autoubiquitination leads to proteasomal degradation. Deubiquitinated by USP8 to get stabilized which induces apoptosis.</text>
</comment>
<keyword id="KW-0053">Apoptosis</keyword>
<keyword id="KW-0072">Autophagy</keyword>
<keyword id="KW-0479">Metal-binding</keyword>
<keyword id="KW-1185">Reference proteome</keyword>
<keyword id="KW-0808">Transferase</keyword>
<keyword id="KW-0832">Ubl conjugation</keyword>
<keyword id="KW-0833">Ubl conjugation pathway</keyword>
<keyword id="KW-0862">Zinc</keyword>
<keyword id="KW-0863">Zinc-finger</keyword>
<evidence type="ECO:0000250" key="1"/>
<evidence type="ECO:0000250" key="2">
    <source>
        <dbReference type="UniProtKB" id="Q8BH75"/>
    </source>
</evidence>
<evidence type="ECO:0000250" key="3">
    <source>
        <dbReference type="UniProtKB" id="Q9H4P4"/>
    </source>
</evidence>
<evidence type="ECO:0000255" key="4">
    <source>
        <dbReference type="PROSITE-ProRule" id="PRU00175"/>
    </source>
</evidence>
<evidence type="ECO:0000255" key="5">
    <source>
        <dbReference type="PROSITE-ProRule" id="PRU00455"/>
    </source>
</evidence>
<evidence type="ECO:0000305" key="6"/>
<dbReference type="EC" id="2.3.2.27"/>
<dbReference type="EMBL" id="CR860024">
    <property type="protein sequence ID" value="CAH92175.1"/>
    <property type="molecule type" value="mRNA"/>
</dbReference>
<dbReference type="RefSeq" id="NP_001126274.1">
    <property type="nucleotide sequence ID" value="NM_001132802.1"/>
</dbReference>
<dbReference type="RefSeq" id="XP_009246169.1">
    <property type="nucleotide sequence ID" value="XM_009247894.1"/>
</dbReference>
<dbReference type="RefSeq" id="XP_009246170.1">
    <property type="nucleotide sequence ID" value="XM_009247895.1"/>
</dbReference>
<dbReference type="SMR" id="Q5R7T5"/>
<dbReference type="FunCoup" id="Q5R7T5">
    <property type="interactions" value="2312"/>
</dbReference>
<dbReference type="STRING" id="9601.ENSPPYP00000005297"/>
<dbReference type="Ensembl" id="ENSPPYT00000005505.2">
    <property type="protein sequence ID" value="ENSPPYP00000005297.1"/>
    <property type="gene ID" value="ENSPPYG00000004649.2"/>
</dbReference>
<dbReference type="GeneID" id="100173246"/>
<dbReference type="KEGG" id="pon:100173246"/>
<dbReference type="CTD" id="10193"/>
<dbReference type="eggNOG" id="KOG0297">
    <property type="taxonomic scope" value="Eukaryota"/>
</dbReference>
<dbReference type="GeneTree" id="ENSGT00530000063647"/>
<dbReference type="HOGENOM" id="CLU_076732_0_0_1"/>
<dbReference type="InParanoid" id="Q5R7T5"/>
<dbReference type="OMA" id="QYENYVC"/>
<dbReference type="OrthoDB" id="1630758at2759"/>
<dbReference type="TreeFam" id="TF351947"/>
<dbReference type="UniPathway" id="UPA00143"/>
<dbReference type="Proteomes" id="UP000001595">
    <property type="component" value="Chromosome 12"/>
</dbReference>
<dbReference type="GO" id="GO:0071782">
    <property type="term" value="C:endoplasmic reticulum tubular network"/>
    <property type="evidence" value="ECO:0007669"/>
    <property type="project" value="Ensembl"/>
</dbReference>
<dbReference type="GO" id="GO:0048471">
    <property type="term" value="C:perinuclear region of cytoplasm"/>
    <property type="evidence" value="ECO:0007669"/>
    <property type="project" value="Ensembl"/>
</dbReference>
<dbReference type="GO" id="GO:0005128">
    <property type="term" value="F:erythropoietin receptor binding"/>
    <property type="evidence" value="ECO:0007669"/>
    <property type="project" value="Ensembl"/>
</dbReference>
<dbReference type="GO" id="GO:0042802">
    <property type="term" value="F:identical protein binding"/>
    <property type="evidence" value="ECO:0007669"/>
    <property type="project" value="Ensembl"/>
</dbReference>
<dbReference type="GO" id="GO:0005135">
    <property type="term" value="F:interleukin-3 receptor binding"/>
    <property type="evidence" value="ECO:0007669"/>
    <property type="project" value="Ensembl"/>
</dbReference>
<dbReference type="GO" id="GO:0019904">
    <property type="term" value="F:protein domain specific binding"/>
    <property type="evidence" value="ECO:0007669"/>
    <property type="project" value="Ensembl"/>
</dbReference>
<dbReference type="GO" id="GO:0030971">
    <property type="term" value="F:receptor tyrosine kinase binding"/>
    <property type="evidence" value="ECO:0007669"/>
    <property type="project" value="Ensembl"/>
</dbReference>
<dbReference type="GO" id="GO:0031267">
    <property type="term" value="F:small GTPase binding"/>
    <property type="evidence" value="ECO:0007669"/>
    <property type="project" value="Ensembl"/>
</dbReference>
<dbReference type="GO" id="GO:0061630">
    <property type="term" value="F:ubiquitin protein ligase activity"/>
    <property type="evidence" value="ECO:0007669"/>
    <property type="project" value="Ensembl"/>
</dbReference>
<dbReference type="GO" id="GO:0004842">
    <property type="term" value="F:ubiquitin-protein transferase activity"/>
    <property type="evidence" value="ECO:0000250"/>
    <property type="project" value="UniProtKB"/>
</dbReference>
<dbReference type="GO" id="GO:0008270">
    <property type="term" value="F:zinc ion binding"/>
    <property type="evidence" value="ECO:0007669"/>
    <property type="project" value="UniProtKB-KW"/>
</dbReference>
<dbReference type="GO" id="GO:0006914">
    <property type="term" value="P:autophagy"/>
    <property type="evidence" value="ECO:0007669"/>
    <property type="project" value="UniProtKB-KW"/>
</dbReference>
<dbReference type="GO" id="GO:0097191">
    <property type="term" value="P:extrinsic apoptotic signaling pathway"/>
    <property type="evidence" value="ECO:0000250"/>
    <property type="project" value="UniProtKB"/>
</dbReference>
<dbReference type="GO" id="GO:0030336">
    <property type="term" value="P:negative regulation of cell migration"/>
    <property type="evidence" value="ECO:0007669"/>
    <property type="project" value="Ensembl"/>
</dbReference>
<dbReference type="GO" id="GO:0008285">
    <property type="term" value="P:negative regulation of cell population proliferation"/>
    <property type="evidence" value="ECO:0007669"/>
    <property type="project" value="Ensembl"/>
</dbReference>
<dbReference type="GO" id="GO:1901525">
    <property type="term" value="P:negative regulation of mitophagy"/>
    <property type="evidence" value="ECO:0007669"/>
    <property type="project" value="Ensembl"/>
</dbReference>
<dbReference type="GO" id="GO:0045732">
    <property type="term" value="P:positive regulation of protein catabolic process"/>
    <property type="evidence" value="ECO:0007669"/>
    <property type="project" value="Ensembl"/>
</dbReference>
<dbReference type="GO" id="GO:2000379">
    <property type="term" value="P:positive regulation of reactive oxygen species metabolic process"/>
    <property type="evidence" value="ECO:0007669"/>
    <property type="project" value="Ensembl"/>
</dbReference>
<dbReference type="GO" id="GO:0010498">
    <property type="term" value="P:proteasomal protein catabolic process"/>
    <property type="evidence" value="ECO:0007669"/>
    <property type="project" value="Ensembl"/>
</dbReference>
<dbReference type="GO" id="GO:0051865">
    <property type="term" value="P:protein autoubiquitination"/>
    <property type="evidence" value="ECO:0007669"/>
    <property type="project" value="Ensembl"/>
</dbReference>
<dbReference type="GO" id="GO:0000209">
    <property type="term" value="P:protein polyubiquitination"/>
    <property type="evidence" value="ECO:0000250"/>
    <property type="project" value="UniProtKB"/>
</dbReference>
<dbReference type="GO" id="GO:0043122">
    <property type="term" value="P:regulation of canonical NF-kappaB signal transduction"/>
    <property type="evidence" value="ECO:0007669"/>
    <property type="project" value="TreeGrafter"/>
</dbReference>
<dbReference type="GO" id="GO:0045619">
    <property type="term" value="P:regulation of lymphocyte differentiation"/>
    <property type="evidence" value="ECO:0007669"/>
    <property type="project" value="Ensembl"/>
</dbReference>
<dbReference type="GO" id="GO:0043408">
    <property type="term" value="P:regulation of MAPK cascade"/>
    <property type="evidence" value="ECO:0007669"/>
    <property type="project" value="Ensembl"/>
</dbReference>
<dbReference type="GO" id="GO:0045637">
    <property type="term" value="P:regulation of myeloid cell differentiation"/>
    <property type="evidence" value="ECO:0007669"/>
    <property type="project" value="Ensembl"/>
</dbReference>
<dbReference type="GO" id="GO:0051896">
    <property type="term" value="P:regulation of phosphatidylinositol 3-kinase/protein kinase B signal transduction"/>
    <property type="evidence" value="ECO:0007669"/>
    <property type="project" value="Ensembl"/>
</dbReference>
<dbReference type="CDD" id="cd16634">
    <property type="entry name" value="mRING-HC-C3HC3D_Nrdp1"/>
    <property type="match status" value="1"/>
</dbReference>
<dbReference type="FunFam" id="3.30.40.10:FF:000268">
    <property type="entry name" value="E3 ubiquitin-protein ligase NRDP1"/>
    <property type="match status" value="1"/>
</dbReference>
<dbReference type="FunFam" id="3.30.40.10:FF:000302">
    <property type="entry name" value="E3 ubiquitin-protein ligase NRDP1"/>
    <property type="match status" value="1"/>
</dbReference>
<dbReference type="Gene3D" id="3.30.40.10">
    <property type="entry name" value="Zinc/RING finger domain, C3HC4 (zinc finger)"/>
    <property type="match status" value="2"/>
</dbReference>
<dbReference type="InterPro" id="IPR015036">
    <property type="entry name" value="NRDP1"/>
</dbReference>
<dbReference type="InterPro" id="IPR037255">
    <property type="entry name" value="NRDP1_C"/>
</dbReference>
<dbReference type="InterPro" id="IPR001841">
    <property type="entry name" value="Znf_RING"/>
</dbReference>
<dbReference type="InterPro" id="IPR013083">
    <property type="entry name" value="Znf_RING/FYVE/PHD"/>
</dbReference>
<dbReference type="InterPro" id="IPR017907">
    <property type="entry name" value="Znf_RING_CS"/>
</dbReference>
<dbReference type="InterPro" id="IPR013010">
    <property type="entry name" value="Znf_SIAH"/>
</dbReference>
<dbReference type="PANTHER" id="PTHR10131:SF157">
    <property type="entry name" value="RECEPTOR-ASSOCIATED FACTOR, PUTATIVE-RELATED"/>
    <property type="match status" value="1"/>
</dbReference>
<dbReference type="PANTHER" id="PTHR10131">
    <property type="entry name" value="TNF RECEPTOR ASSOCIATED FACTOR"/>
    <property type="match status" value="1"/>
</dbReference>
<dbReference type="Pfam" id="PF08941">
    <property type="entry name" value="USP8_interact"/>
    <property type="match status" value="1"/>
</dbReference>
<dbReference type="Pfam" id="PF13923">
    <property type="entry name" value="zf-C3HC4_2"/>
    <property type="match status" value="1"/>
</dbReference>
<dbReference type="SMART" id="SM00184">
    <property type="entry name" value="RING"/>
    <property type="match status" value="1"/>
</dbReference>
<dbReference type="SUPFAM" id="SSF160088">
    <property type="entry name" value="NRDP1 C-terminal domain-like"/>
    <property type="match status" value="1"/>
</dbReference>
<dbReference type="SUPFAM" id="SSF57850">
    <property type="entry name" value="RING/U-box"/>
    <property type="match status" value="1"/>
</dbReference>
<dbReference type="SUPFAM" id="SSF49599">
    <property type="entry name" value="TRAF domain-like"/>
    <property type="match status" value="1"/>
</dbReference>
<dbReference type="PROSITE" id="PS00518">
    <property type="entry name" value="ZF_RING_1"/>
    <property type="match status" value="1"/>
</dbReference>
<dbReference type="PROSITE" id="PS50089">
    <property type="entry name" value="ZF_RING_2"/>
    <property type="match status" value="1"/>
</dbReference>
<dbReference type="PROSITE" id="PS51081">
    <property type="entry name" value="ZF_SIAH"/>
    <property type="match status" value="1"/>
</dbReference>
<protein>
    <recommendedName>
        <fullName>E3 ubiquitin-protein ligase NRDP1</fullName>
        <ecNumber>2.3.2.27</ecNumber>
    </recommendedName>
    <alternativeName>
        <fullName>RING finger protein 41</fullName>
    </alternativeName>
    <alternativeName>
        <fullName evidence="6">RING-type E3 ubiquitin transferase NRDP1</fullName>
    </alternativeName>
</protein>
<gene>
    <name type="primary">RNF41</name>
    <name type="synonym">NRDP1</name>
</gene>
<name>RNF41_PONAB</name>
<organism>
    <name type="scientific">Pongo abelii</name>
    <name type="common">Sumatran orangutan</name>
    <name type="synonym">Pongo pygmaeus abelii</name>
    <dbReference type="NCBI Taxonomy" id="9601"/>
    <lineage>
        <taxon>Eukaryota</taxon>
        <taxon>Metazoa</taxon>
        <taxon>Chordata</taxon>
        <taxon>Craniata</taxon>
        <taxon>Vertebrata</taxon>
        <taxon>Euteleostomi</taxon>
        <taxon>Mammalia</taxon>
        <taxon>Eutheria</taxon>
        <taxon>Euarchontoglires</taxon>
        <taxon>Primates</taxon>
        <taxon>Haplorrhini</taxon>
        <taxon>Catarrhini</taxon>
        <taxon>Hominidae</taxon>
        <taxon>Pongo</taxon>
    </lineage>
</organism>
<feature type="chain" id="PRO_0000290007" description="E3 ubiquitin-protein ligase NRDP1">
    <location>
        <begin position="1"/>
        <end position="317"/>
    </location>
</feature>
<feature type="zinc finger region" description="RING-type; degenerate" evidence="4">
    <location>
        <begin position="18"/>
        <end position="57"/>
    </location>
</feature>
<feature type="zinc finger region" description="SIAH-type; degenerate" evidence="5">
    <location>
        <begin position="78"/>
        <end position="138"/>
    </location>
</feature>